<keyword id="KW-0968">Cytoplasmic vesicle</keyword>
<keyword id="KW-0256">Endoplasmic reticulum</keyword>
<keyword id="KW-0931">ER-Golgi transport</keyword>
<keyword id="KW-0333">Golgi apparatus</keyword>
<keyword id="KW-0342">GTP-binding</keyword>
<keyword id="KW-0378">Hydrolase</keyword>
<keyword id="KW-0472">Membrane</keyword>
<keyword id="KW-0547">Nucleotide-binding</keyword>
<keyword id="KW-0653">Protein transport</keyword>
<keyword id="KW-1185">Reference proteome</keyword>
<keyword id="KW-0813">Transport</keyword>
<reference key="1">
    <citation type="submission" date="2002-01" db="EMBL/GenBank/DDBJ databases">
        <title>sar1 involved in protein secretion of Aspergillus oryzae.</title>
        <authorList>
            <person name="Ishida H."/>
            <person name="Hata Y."/>
            <person name="Kawato A."/>
            <person name="Suginami K."/>
            <person name="Abe Y."/>
        </authorList>
    </citation>
    <scope>NUCLEOTIDE SEQUENCE [GENOMIC DNA]</scope>
</reference>
<reference key="2">
    <citation type="journal article" date="2005" name="Nature">
        <title>Genome sequencing and analysis of Aspergillus oryzae.</title>
        <authorList>
            <person name="Machida M."/>
            <person name="Asai K."/>
            <person name="Sano M."/>
            <person name="Tanaka T."/>
            <person name="Kumagai T."/>
            <person name="Terai G."/>
            <person name="Kusumoto K."/>
            <person name="Arima T."/>
            <person name="Akita O."/>
            <person name="Kashiwagi Y."/>
            <person name="Abe K."/>
            <person name="Gomi K."/>
            <person name="Horiuchi H."/>
            <person name="Kitamoto K."/>
            <person name="Kobayashi T."/>
            <person name="Takeuchi M."/>
            <person name="Denning D.W."/>
            <person name="Galagan J.E."/>
            <person name="Nierman W.C."/>
            <person name="Yu J."/>
            <person name="Archer D.B."/>
            <person name="Bennett J.W."/>
            <person name="Bhatnagar D."/>
            <person name="Cleveland T.E."/>
            <person name="Fedorova N.D."/>
            <person name="Gotoh O."/>
            <person name="Horikawa H."/>
            <person name="Hosoyama A."/>
            <person name="Ichinomiya M."/>
            <person name="Igarashi R."/>
            <person name="Iwashita K."/>
            <person name="Juvvadi P.R."/>
            <person name="Kato M."/>
            <person name="Kato Y."/>
            <person name="Kin T."/>
            <person name="Kokubun A."/>
            <person name="Maeda H."/>
            <person name="Maeyama N."/>
            <person name="Maruyama J."/>
            <person name="Nagasaki H."/>
            <person name="Nakajima T."/>
            <person name="Oda K."/>
            <person name="Okada K."/>
            <person name="Paulsen I."/>
            <person name="Sakamoto K."/>
            <person name="Sawano T."/>
            <person name="Takahashi M."/>
            <person name="Takase K."/>
            <person name="Terabayashi Y."/>
            <person name="Wortman J.R."/>
            <person name="Yamada O."/>
            <person name="Yamagata Y."/>
            <person name="Anazawa H."/>
            <person name="Hata Y."/>
            <person name="Koide Y."/>
            <person name="Komori T."/>
            <person name="Koyama Y."/>
            <person name="Minetoki T."/>
            <person name="Suharnan S."/>
            <person name="Tanaka A."/>
            <person name="Isono K."/>
            <person name="Kuhara S."/>
            <person name="Ogasawara N."/>
            <person name="Kikuchi H."/>
        </authorList>
    </citation>
    <scope>NUCLEOTIDE SEQUENCE [LARGE SCALE GENOMIC DNA]</scope>
    <source>
        <strain>ATCC 42149 / RIB 40</strain>
    </source>
</reference>
<accession>Q877B9</accession>
<proteinExistence type="inferred from homology"/>
<organism>
    <name type="scientific">Aspergillus oryzae (strain ATCC 42149 / RIB 40)</name>
    <name type="common">Yellow koji mold</name>
    <dbReference type="NCBI Taxonomy" id="510516"/>
    <lineage>
        <taxon>Eukaryota</taxon>
        <taxon>Fungi</taxon>
        <taxon>Dikarya</taxon>
        <taxon>Ascomycota</taxon>
        <taxon>Pezizomycotina</taxon>
        <taxon>Eurotiomycetes</taxon>
        <taxon>Eurotiomycetidae</taxon>
        <taxon>Eurotiales</taxon>
        <taxon>Aspergillaceae</taxon>
        <taxon>Aspergillus</taxon>
        <taxon>Aspergillus subgen. Circumdati</taxon>
    </lineage>
</organism>
<dbReference type="EC" id="3.6.5.-"/>
<dbReference type="EMBL" id="AB078721">
    <property type="protein sequence ID" value="BAC56172.1"/>
    <property type="molecule type" value="Genomic_DNA"/>
</dbReference>
<dbReference type="EMBL" id="BA000050">
    <property type="protein sequence ID" value="BAE57971.1"/>
    <property type="molecule type" value="Genomic_DNA"/>
</dbReference>
<dbReference type="RefSeq" id="XP_001819973.1">
    <property type="nucleotide sequence ID" value="XM_001819921.2"/>
</dbReference>
<dbReference type="SMR" id="Q877B9"/>
<dbReference type="STRING" id="510516.Q877B9"/>
<dbReference type="EnsemblFungi" id="BAE57971">
    <property type="protein sequence ID" value="BAE57971"/>
    <property type="gene ID" value="AO090003000842"/>
</dbReference>
<dbReference type="GeneID" id="5991956"/>
<dbReference type="KEGG" id="aor:AO090003000842"/>
<dbReference type="VEuPathDB" id="FungiDB:AO090003000842"/>
<dbReference type="HOGENOM" id="CLU_040729_6_0_1"/>
<dbReference type="OMA" id="GLWNKHG"/>
<dbReference type="OrthoDB" id="31483at5052"/>
<dbReference type="Proteomes" id="UP000006564">
    <property type="component" value="Chromosome 2"/>
</dbReference>
<dbReference type="GO" id="GO:0030127">
    <property type="term" value="C:COPII vesicle coat"/>
    <property type="evidence" value="ECO:0007669"/>
    <property type="project" value="EnsemblFungi"/>
</dbReference>
<dbReference type="GO" id="GO:0070971">
    <property type="term" value="C:endoplasmic reticulum exit site"/>
    <property type="evidence" value="ECO:0007669"/>
    <property type="project" value="EnsemblFungi"/>
</dbReference>
<dbReference type="GO" id="GO:0005789">
    <property type="term" value="C:endoplasmic reticulum membrane"/>
    <property type="evidence" value="ECO:0007669"/>
    <property type="project" value="UniProtKB-SubCell"/>
</dbReference>
<dbReference type="GO" id="GO:0000139">
    <property type="term" value="C:Golgi membrane"/>
    <property type="evidence" value="ECO:0007669"/>
    <property type="project" value="UniProtKB-SubCell"/>
</dbReference>
<dbReference type="GO" id="GO:0044233">
    <property type="term" value="C:mitochondria-associated endoplasmic reticulum membrane contact site"/>
    <property type="evidence" value="ECO:0007669"/>
    <property type="project" value="EnsemblFungi"/>
</dbReference>
<dbReference type="GO" id="GO:0005739">
    <property type="term" value="C:mitochondrion"/>
    <property type="evidence" value="ECO:0007669"/>
    <property type="project" value="GOC"/>
</dbReference>
<dbReference type="GO" id="GO:0005525">
    <property type="term" value="F:GTP binding"/>
    <property type="evidence" value="ECO:0007669"/>
    <property type="project" value="UniProtKB-KW"/>
</dbReference>
<dbReference type="GO" id="GO:0003924">
    <property type="term" value="F:GTPase activity"/>
    <property type="evidence" value="ECO:0007669"/>
    <property type="project" value="EnsemblFungi"/>
</dbReference>
<dbReference type="GO" id="GO:0090158">
    <property type="term" value="P:endoplasmic reticulum membrane organization"/>
    <property type="evidence" value="ECO:0007669"/>
    <property type="project" value="EnsemblFungi"/>
</dbReference>
<dbReference type="GO" id="GO:0006888">
    <property type="term" value="P:endoplasmic reticulum to Golgi vesicle-mediated transport"/>
    <property type="evidence" value="ECO:0007669"/>
    <property type="project" value="EnsemblFungi"/>
</dbReference>
<dbReference type="GO" id="GO:0006886">
    <property type="term" value="P:intracellular protein transport"/>
    <property type="evidence" value="ECO:0007669"/>
    <property type="project" value="InterPro"/>
</dbReference>
<dbReference type="GO" id="GO:0000266">
    <property type="term" value="P:mitochondrial fission"/>
    <property type="evidence" value="ECO:0007669"/>
    <property type="project" value="EnsemblFungi"/>
</dbReference>
<dbReference type="GO" id="GO:0007006">
    <property type="term" value="P:mitochondrial membrane organization"/>
    <property type="evidence" value="ECO:0007669"/>
    <property type="project" value="EnsemblFungi"/>
</dbReference>
<dbReference type="GO" id="GO:0006998">
    <property type="term" value="P:nuclear envelope organization"/>
    <property type="evidence" value="ECO:0007669"/>
    <property type="project" value="EnsemblFungi"/>
</dbReference>
<dbReference type="GO" id="GO:1902953">
    <property type="term" value="P:positive regulation of ER to Golgi vesicle-mediated transport"/>
    <property type="evidence" value="ECO:0007669"/>
    <property type="project" value="EnsemblFungi"/>
</dbReference>
<dbReference type="GO" id="GO:0070863">
    <property type="term" value="P:positive regulation of protein exit from endoplasmic reticulum"/>
    <property type="evidence" value="ECO:0007669"/>
    <property type="project" value="EnsemblFungi"/>
</dbReference>
<dbReference type="GO" id="GO:0003400">
    <property type="term" value="P:regulation of COPII vesicle coating"/>
    <property type="evidence" value="ECO:0007669"/>
    <property type="project" value="EnsemblFungi"/>
</dbReference>
<dbReference type="GO" id="GO:0016050">
    <property type="term" value="P:vesicle organization"/>
    <property type="evidence" value="ECO:0007669"/>
    <property type="project" value="EnsemblFungi"/>
</dbReference>
<dbReference type="CDD" id="cd00879">
    <property type="entry name" value="Sar1"/>
    <property type="match status" value="1"/>
</dbReference>
<dbReference type="FunFam" id="3.40.50.300:FF:000161">
    <property type="entry name" value="Small COPII coat GTPase"/>
    <property type="match status" value="1"/>
</dbReference>
<dbReference type="Gene3D" id="3.40.50.300">
    <property type="entry name" value="P-loop containing nucleotide triphosphate hydrolases"/>
    <property type="match status" value="1"/>
</dbReference>
<dbReference type="InterPro" id="IPR027417">
    <property type="entry name" value="P-loop_NTPase"/>
</dbReference>
<dbReference type="InterPro" id="IPR005225">
    <property type="entry name" value="Small_GTP-bd"/>
</dbReference>
<dbReference type="InterPro" id="IPR006689">
    <property type="entry name" value="Small_GTPase_ARF/SAR"/>
</dbReference>
<dbReference type="InterPro" id="IPR006687">
    <property type="entry name" value="Small_GTPase_SAR1"/>
</dbReference>
<dbReference type="NCBIfam" id="TIGR00231">
    <property type="entry name" value="small_GTP"/>
    <property type="match status" value="1"/>
</dbReference>
<dbReference type="PANTHER" id="PTHR45684">
    <property type="entry name" value="RE74312P"/>
    <property type="match status" value="1"/>
</dbReference>
<dbReference type="Pfam" id="PF00025">
    <property type="entry name" value="Arf"/>
    <property type="match status" value="1"/>
</dbReference>
<dbReference type="PRINTS" id="PR00328">
    <property type="entry name" value="SAR1GTPBP"/>
</dbReference>
<dbReference type="SMART" id="SM00177">
    <property type="entry name" value="ARF"/>
    <property type="match status" value="1"/>
</dbReference>
<dbReference type="SMART" id="SM00178">
    <property type="entry name" value="SAR"/>
    <property type="match status" value="1"/>
</dbReference>
<dbReference type="SUPFAM" id="SSF52540">
    <property type="entry name" value="P-loop containing nucleoside triphosphate hydrolases"/>
    <property type="match status" value="1"/>
</dbReference>
<dbReference type="PROSITE" id="PS51422">
    <property type="entry name" value="SAR1"/>
    <property type="match status" value="1"/>
</dbReference>
<protein>
    <recommendedName>
        <fullName>Small COPII coat GTPase sar1</fullName>
        <ecNumber>3.6.5.-</ecNumber>
    </recommendedName>
</protein>
<feature type="chain" id="PRO_0000295508" description="Small COPII coat GTPase sar1">
    <location>
        <begin position="1"/>
        <end position="189"/>
    </location>
</feature>
<feature type="binding site" evidence="1">
    <location>
        <begin position="27"/>
        <end position="34"/>
    </location>
    <ligand>
        <name>GTP</name>
        <dbReference type="ChEBI" id="CHEBI:37565"/>
    </ligand>
</feature>
<feature type="binding site" evidence="1">
    <location>
        <begin position="70"/>
        <end position="73"/>
    </location>
    <ligand>
        <name>GTP</name>
        <dbReference type="ChEBI" id="CHEBI:37565"/>
    </ligand>
</feature>
<feature type="binding site" evidence="1">
    <location>
        <begin position="129"/>
        <end position="132"/>
    </location>
    <ligand>
        <name>GTP</name>
        <dbReference type="ChEBI" id="CHEBI:37565"/>
    </ligand>
</feature>
<sequence length="189" mass="21416">MWIINWFYDVLASLGLLNKHAKLLFLGLDNAGKTTLLHMLKNDRVAVLQPTAHPTSEELAIGNNRFTTFDLGGHQQARRLWKDYFPEVSGIVFLVDAKDHERFPESKAELDALLAMEELAKVPFLILGNKIDHPDAVSEDELRHQLGLYQTTGKGKVPLEGIRPIEVFMCSVVMRQGYGEGIRWLSQYV</sequence>
<evidence type="ECO:0000250" key="1"/>
<evidence type="ECO:0000305" key="2"/>
<name>SAR1_ASPOR</name>
<comment type="function">
    <text evidence="1">Small GTPase component of the coat protein complex II (COPII) which promotes the formation of transport vesicles from the endoplasmic reticulum (ER). The coat has two main functions, the physical deformation of the endoplasmic reticulum membrane into vesicles and the selection of cargo molecules. Sar1 controls the coat assembly in a stepwise manner. Activated Sar1-GTP binds to membranes first and recruits the sec23/24 complex. These sec23/24-sar1 prebudding intermediates are then collected by the Sec13/31 complex as subunits polymerize to form coated transport vesicles. Conversion to sar1-GDP triggers coat release and recycles COPII subunits (By similarity).</text>
</comment>
<comment type="catalytic activity">
    <reaction>
        <text>GTP + H2O = GDP + phosphate + H(+)</text>
        <dbReference type="Rhea" id="RHEA:19669"/>
        <dbReference type="ChEBI" id="CHEBI:15377"/>
        <dbReference type="ChEBI" id="CHEBI:15378"/>
        <dbReference type="ChEBI" id="CHEBI:37565"/>
        <dbReference type="ChEBI" id="CHEBI:43474"/>
        <dbReference type="ChEBI" id="CHEBI:58189"/>
    </reaction>
</comment>
<comment type="subunit">
    <text evidence="1">COPII is composed of at least 5 proteins: the sec23/24 complex, the sec13/31 complex and sar1.</text>
</comment>
<comment type="subcellular location">
    <subcellularLocation>
        <location evidence="1">Cytoplasmic vesicle</location>
        <location evidence="1">COPII-coated vesicle membrane</location>
        <topology evidence="1">Peripheral membrane protein</topology>
        <orientation evidence="1">Cytoplasmic side</orientation>
    </subcellularLocation>
    <subcellularLocation>
        <location evidence="1">Endoplasmic reticulum membrane</location>
        <topology evidence="1">Peripheral membrane protein</topology>
        <orientation evidence="1">Cytoplasmic side</orientation>
    </subcellularLocation>
    <subcellularLocation>
        <location evidence="1">Golgi apparatus membrane</location>
        <topology evidence="1">Peripheral membrane protein</topology>
        <orientation evidence="1">Cytoplasmic side</orientation>
    </subcellularLocation>
</comment>
<comment type="similarity">
    <text evidence="2">Belongs to the small GTPase superfamily. SAR1 family.</text>
</comment>
<gene>
    <name type="primary">sar1</name>
    <name type="ORF">AO090003000842</name>
</gene>